<feature type="signal peptide" evidence="2">
    <location>
        <begin position="1"/>
        <end position="19"/>
    </location>
</feature>
<feature type="propeptide" id="PRO_0000315512" evidence="3">
    <location>
        <begin position="20"/>
        <end position="41"/>
    </location>
</feature>
<feature type="peptide" id="PRO_0000315513" description="Conotoxin MaI51">
    <location>
        <begin position="46"/>
        <end position="72"/>
    </location>
</feature>
<feature type="modified residue" description="Pyrrolidone carboxylic acid" evidence="1">
    <location>
        <position position="46"/>
    </location>
</feature>
<feature type="modified residue" description="Isoleucine amide" evidence="1">
    <location>
        <position position="72"/>
    </location>
</feature>
<feature type="disulfide bond" evidence="1">
    <location>
        <begin position="47"/>
        <end position="61"/>
    </location>
</feature>
<feature type="disulfide bond" evidence="1">
    <location>
        <begin position="54"/>
        <end position="65"/>
    </location>
</feature>
<feature type="disulfide bond" evidence="1">
    <location>
        <begin position="60"/>
        <end position="69"/>
    </location>
</feature>
<comment type="subcellular location">
    <subcellularLocation>
        <location evidence="1">Secreted</location>
    </subcellularLocation>
</comment>
<comment type="tissue specificity">
    <text>Expressed by the venom duct.</text>
</comment>
<comment type="domain">
    <text evidence="1">The presence of a 'disulfide through disulfide knot' structurally defines this protein as a knottin.</text>
</comment>
<comment type="domain">
    <text>The cysteine framework is VI/VII (C-C-CC-C-C).</text>
</comment>
<comment type="similarity">
    <text evidence="3">Belongs to the conotoxin O2 superfamily.</text>
</comment>
<reference key="1">
    <citation type="journal article" date="2006" name="Peptides">
        <title>Sequence diversity of O-superfamily conopeptides from Conus marmoreus native to Hainan.</title>
        <authorList>
            <person name="Luo S."/>
            <person name="Zhangsun D."/>
            <person name="Lin Q."/>
            <person name="Xie L."/>
            <person name="Wu Y."/>
            <person name="Zhu X."/>
        </authorList>
    </citation>
    <scope>NUCLEOTIDE SEQUENCE [MRNA]</scope>
    <source>
        <tissue>Venom duct</tissue>
    </source>
</reference>
<name>O261_CONMR</name>
<proteinExistence type="evidence at transcript level"/>
<sequence length="73" mass="8394">MQKLTILLLVAAVLLSTQALNQEKRPKEMINVLSKGKTNAERRKRQCEDVWMPCTSNWECCSLDCEMYCTQIG</sequence>
<keyword id="KW-0027">Amidation</keyword>
<keyword id="KW-0165">Cleavage on pair of basic residues</keyword>
<keyword id="KW-1015">Disulfide bond</keyword>
<keyword id="KW-0960">Knottin</keyword>
<keyword id="KW-0528">Neurotoxin</keyword>
<keyword id="KW-0873">Pyrrolidone carboxylic acid</keyword>
<keyword id="KW-0964">Secreted</keyword>
<keyword id="KW-0732">Signal</keyword>
<keyword id="KW-0800">Toxin</keyword>
<evidence type="ECO:0000250" key="1"/>
<evidence type="ECO:0000255" key="2"/>
<evidence type="ECO:0000305" key="3"/>
<accession>Q3YEF4</accession>
<organism>
    <name type="scientific">Conus marmoreus</name>
    <name type="common">Marble cone</name>
    <dbReference type="NCBI Taxonomy" id="42752"/>
    <lineage>
        <taxon>Eukaryota</taxon>
        <taxon>Metazoa</taxon>
        <taxon>Spiralia</taxon>
        <taxon>Lophotrochozoa</taxon>
        <taxon>Mollusca</taxon>
        <taxon>Gastropoda</taxon>
        <taxon>Caenogastropoda</taxon>
        <taxon>Neogastropoda</taxon>
        <taxon>Conoidea</taxon>
        <taxon>Conidae</taxon>
        <taxon>Conus</taxon>
    </lineage>
</organism>
<dbReference type="EMBL" id="DQ141159">
    <property type="protein sequence ID" value="AAZ83760.2"/>
    <property type="molecule type" value="mRNA"/>
</dbReference>
<dbReference type="SMR" id="Q3YEF4"/>
<dbReference type="ConoServer" id="1178">
    <property type="toxin name" value="MaI51 precursor"/>
</dbReference>
<dbReference type="GO" id="GO:0005576">
    <property type="term" value="C:extracellular region"/>
    <property type="evidence" value="ECO:0007669"/>
    <property type="project" value="UniProtKB-SubCell"/>
</dbReference>
<dbReference type="GO" id="GO:0008200">
    <property type="term" value="F:ion channel inhibitor activity"/>
    <property type="evidence" value="ECO:0007669"/>
    <property type="project" value="InterPro"/>
</dbReference>
<dbReference type="GO" id="GO:0090729">
    <property type="term" value="F:toxin activity"/>
    <property type="evidence" value="ECO:0007669"/>
    <property type="project" value="UniProtKB-KW"/>
</dbReference>
<dbReference type="InterPro" id="IPR004214">
    <property type="entry name" value="Conotoxin"/>
</dbReference>
<dbReference type="Pfam" id="PF02950">
    <property type="entry name" value="Conotoxin"/>
    <property type="match status" value="1"/>
</dbReference>
<protein>
    <recommendedName>
        <fullName>Conotoxin MaI51</fullName>
    </recommendedName>
</protein>